<feature type="chain" id="PRO_1000026498" description="L-lactate dehydrogenase">
    <location>
        <begin position="1"/>
        <end position="318"/>
    </location>
</feature>
<feature type="active site" description="Proton acceptor" evidence="1">
    <location>
        <position position="179"/>
    </location>
</feature>
<feature type="binding site" evidence="1">
    <location>
        <position position="18"/>
    </location>
    <ligand>
        <name>NAD(+)</name>
        <dbReference type="ChEBI" id="CHEBI:57540"/>
    </ligand>
</feature>
<feature type="binding site" evidence="1">
    <location>
        <position position="39"/>
    </location>
    <ligand>
        <name>NAD(+)</name>
        <dbReference type="ChEBI" id="CHEBI:57540"/>
    </ligand>
</feature>
<feature type="binding site" evidence="1">
    <location>
        <position position="44"/>
    </location>
    <ligand>
        <name>NAD(+)</name>
        <dbReference type="ChEBI" id="CHEBI:57540"/>
    </ligand>
</feature>
<feature type="binding site" evidence="1">
    <location>
        <position position="69"/>
    </location>
    <ligand>
        <name>NAD(+)</name>
        <dbReference type="ChEBI" id="CHEBI:57540"/>
    </ligand>
</feature>
<feature type="binding site" evidence="1">
    <location>
        <begin position="83"/>
        <end position="84"/>
    </location>
    <ligand>
        <name>NAD(+)</name>
        <dbReference type="ChEBI" id="CHEBI:57540"/>
    </ligand>
</feature>
<feature type="binding site" evidence="1">
    <location>
        <position position="86"/>
    </location>
    <ligand>
        <name>substrate</name>
    </ligand>
</feature>
<feature type="binding site" evidence="1">
    <location>
        <position position="92"/>
    </location>
    <ligand>
        <name>substrate</name>
    </ligand>
</feature>
<feature type="binding site" evidence="1">
    <location>
        <position position="105"/>
    </location>
    <ligand>
        <name>NAD(+)</name>
        <dbReference type="ChEBI" id="CHEBI:57540"/>
    </ligand>
</feature>
<feature type="binding site" evidence="1">
    <location>
        <begin position="122"/>
        <end position="124"/>
    </location>
    <ligand>
        <name>NAD(+)</name>
        <dbReference type="ChEBI" id="CHEBI:57540"/>
    </ligand>
</feature>
<feature type="binding site" evidence="1">
    <location>
        <begin position="124"/>
        <end position="127"/>
    </location>
    <ligand>
        <name>substrate</name>
    </ligand>
</feature>
<feature type="binding site" evidence="1">
    <location>
        <position position="147"/>
    </location>
    <ligand>
        <name>NAD(+)</name>
        <dbReference type="ChEBI" id="CHEBI:57540"/>
    </ligand>
</feature>
<feature type="binding site" evidence="1">
    <location>
        <begin position="152"/>
        <end position="155"/>
    </location>
    <ligand>
        <name>substrate</name>
    </ligand>
</feature>
<feature type="binding site" evidence="1">
    <location>
        <position position="234"/>
    </location>
    <ligand>
        <name>substrate</name>
    </ligand>
</feature>
<feature type="modified residue" description="Phosphotyrosine" evidence="1">
    <location>
        <position position="225"/>
    </location>
</feature>
<comment type="function">
    <text evidence="1">Catalyzes the conversion of lactate to pyruvate.</text>
</comment>
<comment type="catalytic activity">
    <reaction evidence="1">
        <text>(S)-lactate + NAD(+) = pyruvate + NADH + H(+)</text>
        <dbReference type="Rhea" id="RHEA:23444"/>
        <dbReference type="ChEBI" id="CHEBI:15361"/>
        <dbReference type="ChEBI" id="CHEBI:15378"/>
        <dbReference type="ChEBI" id="CHEBI:16651"/>
        <dbReference type="ChEBI" id="CHEBI:57540"/>
        <dbReference type="ChEBI" id="CHEBI:57945"/>
        <dbReference type="EC" id="1.1.1.27"/>
    </reaction>
</comment>
<comment type="pathway">
    <text evidence="1">Fermentation; pyruvate fermentation to lactate; (S)-lactate from pyruvate: step 1/1.</text>
</comment>
<comment type="subunit">
    <text evidence="1">Homotetramer.</text>
</comment>
<comment type="subcellular location">
    <subcellularLocation>
        <location evidence="1">Cytoplasm</location>
    </subcellularLocation>
</comment>
<comment type="similarity">
    <text evidence="1">Belongs to the LDH/MDH superfamily. LDH family.</text>
</comment>
<sequence>MIKKRNTTKISVIGAGSVGATTAYALMLSGVATEIVLVDVNKSKTEGEAMDLSHGADFVKPVNILSGDYKDTEGSDIVVITAGAAQKVGETRLQLINKNINIFKSIIPQVVKYNKDAILLVVSNPVDVLSYVTYKLSGFPKERVIGSGTVLDTSRLKHEIGKRYKIDPRNVNTYIMGEHGDSEIATWSVTNIQNIKIDEYANKENLEYNDNFRKEVYENVKNAAYEVINRKGATFYAIALAVTRIVKAILGDEKTILPVSTLVENYYGIKDVYLGMPCIVGGSGIEKALSIDLNKTEASKLVKSAETLKNTLNNASCL</sequence>
<name>LDH_CLOB1</name>
<proteinExistence type="inferred from homology"/>
<reference key="1">
    <citation type="journal article" date="2007" name="PLoS ONE">
        <title>Analysis of the neurotoxin complex genes in Clostridium botulinum A1-A4 and B1 strains: BoNT/A3, /Ba4 and /B1 clusters are located within plasmids.</title>
        <authorList>
            <person name="Smith T.J."/>
            <person name="Hill K.K."/>
            <person name="Foley B.T."/>
            <person name="Detter J.C."/>
            <person name="Munk A.C."/>
            <person name="Bruce D.C."/>
            <person name="Doggett N.A."/>
            <person name="Smith L.A."/>
            <person name="Marks J.D."/>
            <person name="Xie G."/>
            <person name="Brettin T.S."/>
        </authorList>
    </citation>
    <scope>NUCLEOTIDE SEQUENCE [LARGE SCALE GENOMIC DNA]</scope>
    <source>
        <strain>ATCC 19397 / Type A</strain>
    </source>
</reference>
<accession>A7FU32</accession>
<keyword id="KW-0963">Cytoplasm</keyword>
<keyword id="KW-0520">NAD</keyword>
<keyword id="KW-0560">Oxidoreductase</keyword>
<keyword id="KW-0597">Phosphoprotein</keyword>
<dbReference type="EC" id="1.1.1.27" evidence="1"/>
<dbReference type="EMBL" id="CP000726">
    <property type="protein sequence ID" value="ABS35141.1"/>
    <property type="molecule type" value="Genomic_DNA"/>
</dbReference>
<dbReference type="RefSeq" id="WP_011949073.1">
    <property type="nucleotide sequence ID" value="NC_009697.1"/>
</dbReference>
<dbReference type="SMR" id="A7FU32"/>
<dbReference type="KEGG" id="cba:CLB_1540"/>
<dbReference type="HOGENOM" id="CLU_045401_1_1_9"/>
<dbReference type="UniPathway" id="UPA00554">
    <property type="reaction ID" value="UER00611"/>
</dbReference>
<dbReference type="GO" id="GO:0005737">
    <property type="term" value="C:cytoplasm"/>
    <property type="evidence" value="ECO:0007669"/>
    <property type="project" value="UniProtKB-SubCell"/>
</dbReference>
<dbReference type="GO" id="GO:0004459">
    <property type="term" value="F:L-lactate dehydrogenase activity"/>
    <property type="evidence" value="ECO:0007669"/>
    <property type="project" value="UniProtKB-UniRule"/>
</dbReference>
<dbReference type="GO" id="GO:0006096">
    <property type="term" value="P:glycolytic process"/>
    <property type="evidence" value="ECO:0007669"/>
    <property type="project" value="UniProtKB-UniRule"/>
</dbReference>
<dbReference type="GO" id="GO:0006089">
    <property type="term" value="P:lactate metabolic process"/>
    <property type="evidence" value="ECO:0007669"/>
    <property type="project" value="TreeGrafter"/>
</dbReference>
<dbReference type="CDD" id="cd05292">
    <property type="entry name" value="LDH_2"/>
    <property type="match status" value="1"/>
</dbReference>
<dbReference type="FunFam" id="3.40.50.720:FF:000018">
    <property type="entry name" value="Malate dehydrogenase"/>
    <property type="match status" value="1"/>
</dbReference>
<dbReference type="Gene3D" id="3.90.110.10">
    <property type="entry name" value="Lactate dehydrogenase/glycoside hydrolase, family 4, C-terminal"/>
    <property type="match status" value="1"/>
</dbReference>
<dbReference type="Gene3D" id="3.40.50.720">
    <property type="entry name" value="NAD(P)-binding Rossmann-like Domain"/>
    <property type="match status" value="1"/>
</dbReference>
<dbReference type="HAMAP" id="MF_00488">
    <property type="entry name" value="Lactate_dehydrog"/>
    <property type="match status" value="1"/>
</dbReference>
<dbReference type="InterPro" id="IPR001557">
    <property type="entry name" value="L-lactate/malate_DH"/>
</dbReference>
<dbReference type="InterPro" id="IPR011304">
    <property type="entry name" value="L-lactate_DH"/>
</dbReference>
<dbReference type="InterPro" id="IPR018177">
    <property type="entry name" value="L-lactate_DH_AS"/>
</dbReference>
<dbReference type="InterPro" id="IPR022383">
    <property type="entry name" value="Lactate/malate_DH_C"/>
</dbReference>
<dbReference type="InterPro" id="IPR001236">
    <property type="entry name" value="Lactate/malate_DH_N"/>
</dbReference>
<dbReference type="InterPro" id="IPR015955">
    <property type="entry name" value="Lactate_DH/Glyco_Ohase_4_C"/>
</dbReference>
<dbReference type="InterPro" id="IPR036291">
    <property type="entry name" value="NAD(P)-bd_dom_sf"/>
</dbReference>
<dbReference type="NCBIfam" id="TIGR01771">
    <property type="entry name" value="L-LDH-NAD"/>
    <property type="match status" value="1"/>
</dbReference>
<dbReference type="NCBIfam" id="NF000824">
    <property type="entry name" value="PRK00066.1"/>
    <property type="match status" value="1"/>
</dbReference>
<dbReference type="NCBIfam" id="NF004863">
    <property type="entry name" value="PRK06223.1"/>
    <property type="match status" value="1"/>
</dbReference>
<dbReference type="PANTHER" id="PTHR43128">
    <property type="entry name" value="L-2-HYDROXYCARBOXYLATE DEHYDROGENASE (NAD(P)(+))"/>
    <property type="match status" value="1"/>
</dbReference>
<dbReference type="PANTHER" id="PTHR43128:SF16">
    <property type="entry name" value="L-LACTATE DEHYDROGENASE"/>
    <property type="match status" value="1"/>
</dbReference>
<dbReference type="Pfam" id="PF02866">
    <property type="entry name" value="Ldh_1_C"/>
    <property type="match status" value="1"/>
</dbReference>
<dbReference type="Pfam" id="PF00056">
    <property type="entry name" value="Ldh_1_N"/>
    <property type="match status" value="1"/>
</dbReference>
<dbReference type="PIRSF" id="PIRSF000102">
    <property type="entry name" value="Lac_mal_DH"/>
    <property type="match status" value="1"/>
</dbReference>
<dbReference type="PRINTS" id="PR00086">
    <property type="entry name" value="LLDHDRGNASE"/>
</dbReference>
<dbReference type="SUPFAM" id="SSF56327">
    <property type="entry name" value="LDH C-terminal domain-like"/>
    <property type="match status" value="1"/>
</dbReference>
<dbReference type="SUPFAM" id="SSF51735">
    <property type="entry name" value="NAD(P)-binding Rossmann-fold domains"/>
    <property type="match status" value="1"/>
</dbReference>
<dbReference type="PROSITE" id="PS00064">
    <property type="entry name" value="L_LDH"/>
    <property type="match status" value="1"/>
</dbReference>
<gene>
    <name evidence="1" type="primary">ldh</name>
    <name type="ordered locus">CLB_1540</name>
</gene>
<organism>
    <name type="scientific">Clostridium botulinum (strain ATCC 19397 / Type A)</name>
    <dbReference type="NCBI Taxonomy" id="441770"/>
    <lineage>
        <taxon>Bacteria</taxon>
        <taxon>Bacillati</taxon>
        <taxon>Bacillota</taxon>
        <taxon>Clostridia</taxon>
        <taxon>Eubacteriales</taxon>
        <taxon>Clostridiaceae</taxon>
        <taxon>Clostridium</taxon>
    </lineage>
</organism>
<protein>
    <recommendedName>
        <fullName evidence="1">L-lactate dehydrogenase</fullName>
        <shortName evidence="1">L-LDH</shortName>
        <ecNumber evidence="1">1.1.1.27</ecNumber>
    </recommendedName>
</protein>
<evidence type="ECO:0000255" key="1">
    <source>
        <dbReference type="HAMAP-Rule" id="MF_00488"/>
    </source>
</evidence>